<proteinExistence type="inferred from homology"/>
<dbReference type="EMBL" id="CP000423">
    <property type="protein sequence ID" value="ABJ69755.1"/>
    <property type="molecule type" value="Genomic_DNA"/>
</dbReference>
<dbReference type="RefSeq" id="WP_003578292.1">
    <property type="nucleotide sequence ID" value="NC_008526.1"/>
</dbReference>
<dbReference type="RefSeq" id="YP_806197.1">
    <property type="nucleotide sequence ID" value="NC_008526.1"/>
</dbReference>
<dbReference type="SMR" id="Q03AL7"/>
<dbReference type="STRING" id="321967.LSEI_0956"/>
<dbReference type="PaxDb" id="321967-LSEI_0956"/>
<dbReference type="KEGG" id="lca:LSEI_0956"/>
<dbReference type="PATRIC" id="fig|321967.11.peg.926"/>
<dbReference type="HOGENOM" id="CLU_009621_2_1_9"/>
<dbReference type="Proteomes" id="UP000001651">
    <property type="component" value="Chromosome"/>
</dbReference>
<dbReference type="GO" id="GO:0005737">
    <property type="term" value="C:cytoplasm"/>
    <property type="evidence" value="ECO:0007669"/>
    <property type="project" value="UniProtKB-SubCell"/>
</dbReference>
<dbReference type="GO" id="GO:0009380">
    <property type="term" value="C:excinuclease repair complex"/>
    <property type="evidence" value="ECO:0007669"/>
    <property type="project" value="InterPro"/>
</dbReference>
<dbReference type="GO" id="GO:0005524">
    <property type="term" value="F:ATP binding"/>
    <property type="evidence" value="ECO:0007669"/>
    <property type="project" value="UniProtKB-UniRule"/>
</dbReference>
<dbReference type="GO" id="GO:0016887">
    <property type="term" value="F:ATP hydrolysis activity"/>
    <property type="evidence" value="ECO:0007669"/>
    <property type="project" value="InterPro"/>
</dbReference>
<dbReference type="GO" id="GO:0003677">
    <property type="term" value="F:DNA binding"/>
    <property type="evidence" value="ECO:0007669"/>
    <property type="project" value="UniProtKB-UniRule"/>
</dbReference>
<dbReference type="GO" id="GO:0009381">
    <property type="term" value="F:excinuclease ABC activity"/>
    <property type="evidence" value="ECO:0007669"/>
    <property type="project" value="UniProtKB-UniRule"/>
</dbReference>
<dbReference type="GO" id="GO:0004386">
    <property type="term" value="F:helicase activity"/>
    <property type="evidence" value="ECO:0007669"/>
    <property type="project" value="UniProtKB-KW"/>
</dbReference>
<dbReference type="GO" id="GO:0006289">
    <property type="term" value="P:nucleotide-excision repair"/>
    <property type="evidence" value="ECO:0007669"/>
    <property type="project" value="UniProtKB-UniRule"/>
</dbReference>
<dbReference type="GO" id="GO:0009432">
    <property type="term" value="P:SOS response"/>
    <property type="evidence" value="ECO:0007669"/>
    <property type="project" value="UniProtKB-UniRule"/>
</dbReference>
<dbReference type="CDD" id="cd17916">
    <property type="entry name" value="DEXHc_UvrB"/>
    <property type="match status" value="1"/>
</dbReference>
<dbReference type="CDD" id="cd18790">
    <property type="entry name" value="SF2_C_UvrB"/>
    <property type="match status" value="1"/>
</dbReference>
<dbReference type="Gene3D" id="3.40.50.300">
    <property type="entry name" value="P-loop containing nucleotide triphosphate hydrolases"/>
    <property type="match status" value="3"/>
</dbReference>
<dbReference type="Gene3D" id="4.10.860.10">
    <property type="entry name" value="UVR domain"/>
    <property type="match status" value="1"/>
</dbReference>
<dbReference type="HAMAP" id="MF_00204">
    <property type="entry name" value="UvrB"/>
    <property type="match status" value="1"/>
</dbReference>
<dbReference type="InterPro" id="IPR006935">
    <property type="entry name" value="Helicase/UvrB_N"/>
</dbReference>
<dbReference type="InterPro" id="IPR014001">
    <property type="entry name" value="Helicase_ATP-bd"/>
</dbReference>
<dbReference type="InterPro" id="IPR001650">
    <property type="entry name" value="Helicase_C-like"/>
</dbReference>
<dbReference type="InterPro" id="IPR027417">
    <property type="entry name" value="P-loop_NTPase"/>
</dbReference>
<dbReference type="InterPro" id="IPR001943">
    <property type="entry name" value="UVR_dom"/>
</dbReference>
<dbReference type="InterPro" id="IPR036876">
    <property type="entry name" value="UVR_dom_sf"/>
</dbReference>
<dbReference type="InterPro" id="IPR004807">
    <property type="entry name" value="UvrB"/>
</dbReference>
<dbReference type="InterPro" id="IPR041471">
    <property type="entry name" value="UvrB_inter"/>
</dbReference>
<dbReference type="InterPro" id="IPR024759">
    <property type="entry name" value="UvrB_YAD/RRR_dom"/>
</dbReference>
<dbReference type="NCBIfam" id="NF003673">
    <property type="entry name" value="PRK05298.1"/>
    <property type="match status" value="1"/>
</dbReference>
<dbReference type="NCBIfam" id="TIGR00631">
    <property type="entry name" value="uvrb"/>
    <property type="match status" value="1"/>
</dbReference>
<dbReference type="PANTHER" id="PTHR24029">
    <property type="entry name" value="UVRABC SYSTEM PROTEIN B"/>
    <property type="match status" value="1"/>
</dbReference>
<dbReference type="PANTHER" id="PTHR24029:SF0">
    <property type="entry name" value="UVRABC SYSTEM PROTEIN B"/>
    <property type="match status" value="1"/>
</dbReference>
<dbReference type="Pfam" id="PF00271">
    <property type="entry name" value="Helicase_C"/>
    <property type="match status" value="1"/>
</dbReference>
<dbReference type="Pfam" id="PF04851">
    <property type="entry name" value="ResIII"/>
    <property type="match status" value="1"/>
</dbReference>
<dbReference type="Pfam" id="PF02151">
    <property type="entry name" value="UVR"/>
    <property type="match status" value="1"/>
</dbReference>
<dbReference type="Pfam" id="PF12344">
    <property type="entry name" value="UvrB"/>
    <property type="match status" value="1"/>
</dbReference>
<dbReference type="Pfam" id="PF17757">
    <property type="entry name" value="UvrB_inter"/>
    <property type="match status" value="1"/>
</dbReference>
<dbReference type="SMART" id="SM00487">
    <property type="entry name" value="DEXDc"/>
    <property type="match status" value="1"/>
</dbReference>
<dbReference type="SMART" id="SM00490">
    <property type="entry name" value="HELICc"/>
    <property type="match status" value="1"/>
</dbReference>
<dbReference type="SUPFAM" id="SSF46600">
    <property type="entry name" value="C-terminal UvrC-binding domain of UvrB"/>
    <property type="match status" value="1"/>
</dbReference>
<dbReference type="SUPFAM" id="SSF52540">
    <property type="entry name" value="P-loop containing nucleoside triphosphate hydrolases"/>
    <property type="match status" value="2"/>
</dbReference>
<dbReference type="PROSITE" id="PS51192">
    <property type="entry name" value="HELICASE_ATP_BIND_1"/>
    <property type="match status" value="1"/>
</dbReference>
<dbReference type="PROSITE" id="PS51194">
    <property type="entry name" value="HELICASE_CTER"/>
    <property type="match status" value="1"/>
</dbReference>
<dbReference type="PROSITE" id="PS50151">
    <property type="entry name" value="UVR"/>
    <property type="match status" value="1"/>
</dbReference>
<sequence>MIERIADRKFDLVSPYQPAGDQPQAIAKLTKGFEEGKKEQILLGATGTGKTFTMSNIIANLNKPTLILSHNKTLAGQLYGEFKEFFPHNAVEYFVSYYDYYQPEAYVPSTDTYIEKDSAINDEIDKLRHSATSALLERNDVIVVASVSSIFGLGDPHEYKNHVLSLRTGMTIDRNTLLRQLVDIQFDRNDIDFQRGRFRVRGDVVEIFPASRDDHAIRVEFFGDEIDRITEVDALTGEVIGTRDHVAIFPATHFMTSDEQMQRAIKSIAAELEAQLKVLRSENKLLEAQRLEQRTNYDIEMMREMGFTSGIENYSRHMDGRKPGEPPYTLLDFFPKDFNIMVDESHVTMPQIRGMYNGDRARKQMLVNYGFRLPSALDNRPLKINEFEQHVHRILYVSATPGPYELDRVPKDDIAEQIIRPTGLLDPKIEVRPVMGQIDDLVGEINKRVDAHERVFITTLTKKMAEDLTDYLKDMGIKVRYLHSDIKTLERTQIIRDLRLGKFDVLIGINLLREGIDVPEVSLIAILDADKEGFLRAERSLIQTIGRASRNEHGKVIMYADKVTDSMKAAIDETQRRRTIQEKFNEEHHITPKTIIKPIRAAISSYEQSDDDKAEAKKTFAEVDYEDMSKADKKELVANLRSQMQAAAKKLDFEQAASLRDTILELQADMS</sequence>
<accession>Q03AL7</accession>
<organism>
    <name type="scientific">Lacticaseibacillus paracasei (strain ATCC 334 / BCRC 17002 / CCUG 31169 / CIP 107868 / KCTC 3260 / NRRL B-441)</name>
    <name type="common">Lactobacillus paracasei</name>
    <dbReference type="NCBI Taxonomy" id="321967"/>
    <lineage>
        <taxon>Bacteria</taxon>
        <taxon>Bacillati</taxon>
        <taxon>Bacillota</taxon>
        <taxon>Bacilli</taxon>
        <taxon>Lactobacillales</taxon>
        <taxon>Lactobacillaceae</taxon>
        <taxon>Lacticaseibacillus</taxon>
    </lineage>
</organism>
<comment type="function">
    <text evidence="1">The UvrABC repair system catalyzes the recognition and processing of DNA lesions. A damage recognition complex composed of 2 UvrA and 2 UvrB subunits scans DNA for abnormalities. Upon binding of the UvrA(2)B(2) complex to a putative damaged site, the DNA wraps around one UvrB monomer. DNA wrap is dependent on ATP binding by UvrB and probably causes local melting of the DNA helix, facilitating insertion of UvrB beta-hairpin between the DNA strands. Then UvrB probes one DNA strand for the presence of a lesion. If a lesion is found the UvrA subunits dissociate and the UvrB-DNA preincision complex is formed. This complex is subsequently bound by UvrC and the second UvrB is released. If no lesion is found, the DNA wraps around the other UvrB subunit that will check the other stand for damage.</text>
</comment>
<comment type="subunit">
    <text evidence="1">Forms a heterotetramer with UvrA during the search for lesions. Interacts with UvrC in an incision complex.</text>
</comment>
<comment type="subcellular location">
    <subcellularLocation>
        <location evidence="1">Cytoplasm</location>
    </subcellularLocation>
</comment>
<comment type="domain">
    <text evidence="1">The beta-hairpin motif is involved in DNA binding.</text>
</comment>
<comment type="similarity">
    <text evidence="1">Belongs to the UvrB family.</text>
</comment>
<keyword id="KW-0067">ATP-binding</keyword>
<keyword id="KW-0963">Cytoplasm</keyword>
<keyword id="KW-0227">DNA damage</keyword>
<keyword id="KW-0228">DNA excision</keyword>
<keyword id="KW-0234">DNA repair</keyword>
<keyword id="KW-0267">Excision nuclease</keyword>
<keyword id="KW-0347">Helicase</keyword>
<keyword id="KW-0378">Hydrolase</keyword>
<keyword id="KW-0547">Nucleotide-binding</keyword>
<keyword id="KW-1185">Reference proteome</keyword>
<keyword id="KW-0742">SOS response</keyword>
<evidence type="ECO:0000255" key="1">
    <source>
        <dbReference type="HAMAP-Rule" id="MF_00204"/>
    </source>
</evidence>
<protein>
    <recommendedName>
        <fullName evidence="1">UvrABC system protein B</fullName>
        <shortName evidence="1">Protein UvrB</shortName>
    </recommendedName>
    <alternativeName>
        <fullName evidence="1">Excinuclease ABC subunit B</fullName>
    </alternativeName>
</protein>
<name>UVRB_LACP3</name>
<reference key="1">
    <citation type="journal article" date="2006" name="Proc. Natl. Acad. Sci. U.S.A.">
        <title>Comparative genomics of the lactic acid bacteria.</title>
        <authorList>
            <person name="Makarova K.S."/>
            <person name="Slesarev A."/>
            <person name="Wolf Y.I."/>
            <person name="Sorokin A."/>
            <person name="Mirkin B."/>
            <person name="Koonin E.V."/>
            <person name="Pavlov A."/>
            <person name="Pavlova N."/>
            <person name="Karamychev V."/>
            <person name="Polouchine N."/>
            <person name="Shakhova V."/>
            <person name="Grigoriev I."/>
            <person name="Lou Y."/>
            <person name="Rohksar D."/>
            <person name="Lucas S."/>
            <person name="Huang K."/>
            <person name="Goodstein D.M."/>
            <person name="Hawkins T."/>
            <person name="Plengvidhya V."/>
            <person name="Welker D."/>
            <person name="Hughes J."/>
            <person name="Goh Y."/>
            <person name="Benson A."/>
            <person name="Baldwin K."/>
            <person name="Lee J.-H."/>
            <person name="Diaz-Muniz I."/>
            <person name="Dosti B."/>
            <person name="Smeianov V."/>
            <person name="Wechter W."/>
            <person name="Barabote R."/>
            <person name="Lorca G."/>
            <person name="Altermann E."/>
            <person name="Barrangou R."/>
            <person name="Ganesan B."/>
            <person name="Xie Y."/>
            <person name="Rawsthorne H."/>
            <person name="Tamir D."/>
            <person name="Parker C."/>
            <person name="Breidt F."/>
            <person name="Broadbent J.R."/>
            <person name="Hutkins R."/>
            <person name="O'Sullivan D."/>
            <person name="Steele J."/>
            <person name="Unlu G."/>
            <person name="Saier M.H. Jr."/>
            <person name="Klaenhammer T."/>
            <person name="Richardson P."/>
            <person name="Kozyavkin S."/>
            <person name="Weimer B.C."/>
            <person name="Mills D.A."/>
        </authorList>
    </citation>
    <scope>NUCLEOTIDE SEQUENCE [LARGE SCALE GENOMIC DNA]</scope>
    <source>
        <strain>ATCC 334 / BCRC 17002 / CCUG 31169 / CIP 107868 / KCTC 3260 / NRRL B-441</strain>
    </source>
</reference>
<gene>
    <name evidence="1" type="primary">uvrB</name>
    <name type="ordered locus">LSEI_0956</name>
</gene>
<feature type="chain" id="PRO_1000077897" description="UvrABC system protein B">
    <location>
        <begin position="1"/>
        <end position="671"/>
    </location>
</feature>
<feature type="domain" description="Helicase ATP-binding" evidence="1">
    <location>
        <begin position="31"/>
        <end position="189"/>
    </location>
</feature>
<feature type="domain" description="Helicase C-terminal" evidence="1">
    <location>
        <begin position="437"/>
        <end position="599"/>
    </location>
</feature>
<feature type="domain" description="UVR" evidence="1">
    <location>
        <begin position="634"/>
        <end position="669"/>
    </location>
</feature>
<feature type="short sequence motif" description="Beta-hairpin">
    <location>
        <begin position="97"/>
        <end position="120"/>
    </location>
</feature>
<feature type="binding site" evidence="1">
    <location>
        <begin position="44"/>
        <end position="51"/>
    </location>
    <ligand>
        <name>ATP</name>
        <dbReference type="ChEBI" id="CHEBI:30616"/>
    </ligand>
</feature>